<proteinExistence type="evidence at protein level"/>
<feature type="chain" id="PRO_0000248301" description="Serine/threonine-protein kinase LMTK1">
    <location>
        <begin position="1"/>
        <end position="1365"/>
    </location>
</feature>
<feature type="transmembrane region" description="Helical" evidence="3">
    <location>
        <begin position="32"/>
        <end position="52"/>
    </location>
</feature>
<feature type="domain" description="Protein kinase" evidence="4">
    <location>
        <begin position="126"/>
        <end position="396"/>
    </location>
</feature>
<feature type="region of interest" description="Disordered" evidence="6">
    <location>
        <begin position="550"/>
        <end position="623"/>
    </location>
</feature>
<feature type="region of interest" description="Disordered" evidence="6">
    <location>
        <begin position="638"/>
        <end position="698"/>
    </location>
</feature>
<feature type="region of interest" description="Disordered" evidence="6">
    <location>
        <begin position="791"/>
        <end position="1186"/>
    </location>
</feature>
<feature type="region of interest" description="Disordered" evidence="6">
    <location>
        <begin position="1237"/>
        <end position="1293"/>
    </location>
</feature>
<feature type="region of interest" description="Disordered" evidence="6">
    <location>
        <begin position="1343"/>
        <end position="1365"/>
    </location>
</feature>
<feature type="compositionally biased region" description="Polar residues" evidence="6">
    <location>
        <begin position="560"/>
        <end position="575"/>
    </location>
</feature>
<feature type="compositionally biased region" description="Low complexity" evidence="6">
    <location>
        <begin position="638"/>
        <end position="655"/>
    </location>
</feature>
<feature type="compositionally biased region" description="Low complexity" evidence="6">
    <location>
        <begin position="675"/>
        <end position="686"/>
    </location>
</feature>
<feature type="compositionally biased region" description="Polar residues" evidence="6">
    <location>
        <begin position="848"/>
        <end position="860"/>
    </location>
</feature>
<feature type="compositionally biased region" description="Polar residues" evidence="6">
    <location>
        <begin position="869"/>
        <end position="879"/>
    </location>
</feature>
<feature type="compositionally biased region" description="Low complexity" evidence="6">
    <location>
        <begin position="904"/>
        <end position="918"/>
    </location>
</feature>
<feature type="compositionally biased region" description="Low complexity" evidence="6">
    <location>
        <begin position="981"/>
        <end position="993"/>
    </location>
</feature>
<feature type="compositionally biased region" description="Basic and acidic residues" evidence="6">
    <location>
        <begin position="1015"/>
        <end position="1030"/>
    </location>
</feature>
<feature type="compositionally biased region" description="Polar residues" evidence="6">
    <location>
        <begin position="1037"/>
        <end position="1053"/>
    </location>
</feature>
<feature type="compositionally biased region" description="Low complexity" evidence="6">
    <location>
        <begin position="1072"/>
        <end position="1083"/>
    </location>
</feature>
<feature type="compositionally biased region" description="Polar residues" evidence="6">
    <location>
        <begin position="1104"/>
        <end position="1132"/>
    </location>
</feature>
<feature type="compositionally biased region" description="Acidic residues" evidence="6">
    <location>
        <begin position="1150"/>
        <end position="1164"/>
    </location>
</feature>
<feature type="compositionally biased region" description="Gly residues" evidence="6">
    <location>
        <begin position="1354"/>
        <end position="1365"/>
    </location>
</feature>
<feature type="active site" description="Proton acceptor" evidence="4 5">
    <location>
        <position position="254"/>
    </location>
</feature>
<feature type="binding site" evidence="4">
    <location>
        <begin position="132"/>
        <end position="140"/>
    </location>
    <ligand>
        <name>ATP</name>
        <dbReference type="ChEBI" id="CHEBI:30616"/>
    </ligand>
</feature>
<feature type="binding site" evidence="4">
    <location>
        <position position="157"/>
    </location>
    <ligand>
        <name>ATP</name>
        <dbReference type="ChEBI" id="CHEBI:30616"/>
    </ligand>
</feature>
<feature type="modified residue" description="Phosphoserine" evidence="2">
    <location>
        <position position="500"/>
    </location>
</feature>
<feature type="modified residue" description="Phosphoserine" evidence="18">
    <location>
        <position position="1035"/>
    </location>
</feature>
<feature type="modified residue" description="Phosphothreonine" evidence="18">
    <location>
        <position position="1156"/>
    </location>
</feature>
<feature type="modified residue" description="Phosphoserine" evidence="18">
    <location>
        <position position="1159"/>
    </location>
</feature>
<feature type="modified residue" description="Phosphoserine" evidence="18">
    <location>
        <position position="1162"/>
    </location>
</feature>
<feature type="modified residue" description="Phosphoserine" evidence="18">
    <location>
        <position position="1175"/>
    </location>
</feature>
<feature type="modified residue" description="Phosphoserine" evidence="18">
    <location>
        <position position="1178"/>
    </location>
</feature>
<feature type="modified residue" description="Phosphoserine" evidence="2">
    <location>
        <position position="1253"/>
    </location>
</feature>
<feature type="splice variant" id="VSP_020229" description="In isoform 4." evidence="14">
    <location>
        <begin position="1"/>
        <end position="168"/>
    </location>
</feature>
<feature type="splice variant" id="VSP_020230" description="In isoform 2." evidence="12 13 14 16">
    <location>
        <begin position="1"/>
        <end position="48"/>
    </location>
</feature>
<feature type="splice variant" id="VSP_020231" description="In isoform 3." evidence="11 15">
    <original>M</original>
    <variation>MLIALLALAM</variation>
    <location>
        <position position="1"/>
    </location>
</feature>
<feature type="splice variant" id="VSP_020232" description="In isoform 4." evidence="14">
    <original>PAAGAGGRYTEA</original>
    <variation>MSVVGAEVEQRDTTNGDL</variation>
    <location>
        <begin position="1354"/>
        <end position="1365"/>
    </location>
</feature>
<feature type="mutagenesis site" description="Significant decrease in autophosphorylation." evidence="8 9">
    <original>D</original>
    <variation>V</variation>
    <location>
        <position position="254"/>
    </location>
</feature>
<feature type="sequence conflict" description="In Ref. 6; BAC29541." evidence="17" ref="6">
    <original>V</original>
    <variation>D</variation>
    <location>
        <position position="270"/>
    </location>
</feature>
<feature type="sequence conflict" description="In Ref. 6; BAC29541/BAE27789/BAE33045 and 7; AAH80846." evidence="17" ref="6 7">
    <original>R</original>
    <variation>G</variation>
    <location>
        <position position="345"/>
    </location>
</feature>
<feature type="sequence conflict" description="In Ref. 6; BAE33045." evidence="17" ref="6">
    <original>T</original>
    <variation>K</variation>
    <location>
        <position position="773"/>
    </location>
</feature>
<feature type="sequence conflict" description="In Ref. 6; BAE27789." evidence="17" ref="6">
    <original>G</original>
    <variation>S</variation>
    <location>
        <position position="988"/>
    </location>
</feature>
<feature type="sequence conflict" description="In Ref. 6; BAC29541." evidence="17" ref="6">
    <original>A</original>
    <variation>S</variation>
    <location>
        <position position="1317"/>
    </location>
</feature>
<organism>
    <name type="scientific">Mus musculus</name>
    <name type="common">Mouse</name>
    <dbReference type="NCBI Taxonomy" id="10090"/>
    <lineage>
        <taxon>Eukaryota</taxon>
        <taxon>Metazoa</taxon>
        <taxon>Chordata</taxon>
        <taxon>Craniata</taxon>
        <taxon>Vertebrata</taxon>
        <taxon>Euteleostomi</taxon>
        <taxon>Mammalia</taxon>
        <taxon>Eutheria</taxon>
        <taxon>Euarchontoglires</taxon>
        <taxon>Glires</taxon>
        <taxon>Rodentia</taxon>
        <taxon>Myomorpha</taxon>
        <taxon>Muroidea</taxon>
        <taxon>Muridae</taxon>
        <taxon>Murinae</taxon>
        <taxon>Mus</taxon>
        <taxon>Mus</taxon>
    </lineage>
</organism>
<dbReference type="EC" id="2.7.11.1"/>
<dbReference type="EMBL" id="AF011908">
    <property type="protein sequence ID" value="AAB71837.1"/>
    <property type="molecule type" value="mRNA"/>
</dbReference>
<dbReference type="EMBL" id="AY236858">
    <property type="protein sequence ID" value="AAO92350.1"/>
    <property type="molecule type" value="mRNA"/>
</dbReference>
<dbReference type="EMBL" id="AY236859">
    <property type="protein sequence ID" value="AAO92351.1"/>
    <property type="molecule type" value="mRNA"/>
</dbReference>
<dbReference type="EMBL" id="AB288871">
    <property type="protein sequence ID" value="BAF64832.1"/>
    <property type="molecule type" value="mRNA"/>
</dbReference>
<dbReference type="EMBL" id="AB093253">
    <property type="protein sequence ID" value="BAC41437.2"/>
    <property type="status" value="ALT_INIT"/>
    <property type="molecule type" value="mRNA"/>
</dbReference>
<dbReference type="EMBL" id="AK036705">
    <property type="protein sequence ID" value="BAC29541.1"/>
    <property type="molecule type" value="mRNA"/>
</dbReference>
<dbReference type="EMBL" id="AK147239">
    <property type="protein sequence ID" value="BAE27789.1"/>
    <property type="molecule type" value="mRNA"/>
</dbReference>
<dbReference type="EMBL" id="AK155100">
    <property type="protein sequence ID" value="BAE33045.1"/>
    <property type="molecule type" value="mRNA"/>
</dbReference>
<dbReference type="EMBL" id="BC080846">
    <property type="protein sequence ID" value="AAH80846.1"/>
    <property type="molecule type" value="mRNA"/>
</dbReference>
<dbReference type="CCDS" id="CCDS25725.1">
    <molecule id="Q80YE4-2"/>
</dbReference>
<dbReference type="CCDS" id="CCDS56826.1">
    <molecule id="Q80YE4-3"/>
</dbReference>
<dbReference type="PIR" id="T03748">
    <property type="entry name" value="T03748"/>
</dbReference>
<dbReference type="RefSeq" id="NP_001185714.1">
    <property type="nucleotide sequence ID" value="NM_001198785.1"/>
</dbReference>
<dbReference type="RefSeq" id="NP_001185716.1">
    <property type="nucleotide sequence ID" value="NM_001198787.1"/>
</dbReference>
<dbReference type="RefSeq" id="NP_031403.2">
    <property type="nucleotide sequence ID" value="NM_007377.4"/>
</dbReference>
<dbReference type="SMR" id="Q80YE4"/>
<dbReference type="BioGRID" id="197899">
    <property type="interactions" value="1"/>
</dbReference>
<dbReference type="FunCoup" id="Q80YE4">
    <property type="interactions" value="158"/>
</dbReference>
<dbReference type="IntAct" id="Q80YE4">
    <property type="interactions" value="1"/>
</dbReference>
<dbReference type="STRING" id="10090.ENSMUSP00000067181"/>
<dbReference type="GlyGen" id="Q80YE4">
    <property type="glycosylation" value="4 sites, 1 N-linked glycan (1 site)"/>
</dbReference>
<dbReference type="iPTMnet" id="Q80YE4"/>
<dbReference type="PhosphoSitePlus" id="Q80YE4"/>
<dbReference type="SwissPalm" id="Q80YE4"/>
<dbReference type="PaxDb" id="10090-ENSMUSP00000099309"/>
<dbReference type="PeptideAtlas" id="Q80YE4"/>
<dbReference type="ProteomicsDB" id="292104">
    <molecule id="Q80YE4-1"/>
</dbReference>
<dbReference type="ProteomicsDB" id="292105">
    <molecule id="Q80YE4-2"/>
</dbReference>
<dbReference type="ProteomicsDB" id="292106">
    <molecule id="Q80YE4-3"/>
</dbReference>
<dbReference type="ProteomicsDB" id="292107">
    <molecule id="Q80YE4-4"/>
</dbReference>
<dbReference type="DNASU" id="11302"/>
<dbReference type="GeneID" id="11302"/>
<dbReference type="KEGG" id="mmu:11302"/>
<dbReference type="UCSC" id="uc007mrn.3">
    <molecule id="Q80YE4-4"/>
    <property type="organism name" value="mouse"/>
</dbReference>
<dbReference type="AGR" id="MGI:1197518"/>
<dbReference type="CTD" id="9625"/>
<dbReference type="MGI" id="MGI:1197518">
    <property type="gene designation" value="Aatk"/>
</dbReference>
<dbReference type="eggNOG" id="ENOG502RCHK">
    <property type="taxonomic scope" value="Eukaryota"/>
</dbReference>
<dbReference type="InParanoid" id="Q80YE4"/>
<dbReference type="OrthoDB" id="5973359at2759"/>
<dbReference type="BioGRID-ORCS" id="11302">
    <property type="hits" value="2 hits in 78 CRISPR screens"/>
</dbReference>
<dbReference type="PRO" id="PR:Q80YE4"/>
<dbReference type="Proteomes" id="UP000000589">
    <property type="component" value="Unplaced"/>
</dbReference>
<dbReference type="RNAct" id="Q80YE4">
    <property type="molecule type" value="protein"/>
</dbReference>
<dbReference type="GO" id="GO:0030425">
    <property type="term" value="C:dendrite"/>
    <property type="evidence" value="ECO:0007669"/>
    <property type="project" value="UniProtKB-SubCell"/>
</dbReference>
<dbReference type="GO" id="GO:0005783">
    <property type="term" value="C:endoplasmic reticulum"/>
    <property type="evidence" value="ECO:0000314"/>
    <property type="project" value="MGI"/>
</dbReference>
<dbReference type="GO" id="GO:0030426">
    <property type="term" value="C:growth cone"/>
    <property type="evidence" value="ECO:0007669"/>
    <property type="project" value="UniProtKB-SubCell"/>
</dbReference>
<dbReference type="GO" id="GO:0016020">
    <property type="term" value="C:membrane"/>
    <property type="evidence" value="ECO:0007669"/>
    <property type="project" value="UniProtKB-SubCell"/>
</dbReference>
<dbReference type="GO" id="GO:0048471">
    <property type="term" value="C:perinuclear region of cytoplasm"/>
    <property type="evidence" value="ECO:0007669"/>
    <property type="project" value="UniProtKB-SubCell"/>
</dbReference>
<dbReference type="GO" id="GO:0005524">
    <property type="term" value="F:ATP binding"/>
    <property type="evidence" value="ECO:0007669"/>
    <property type="project" value="UniProtKB-KW"/>
</dbReference>
<dbReference type="GO" id="GO:0106310">
    <property type="term" value="F:protein serine kinase activity"/>
    <property type="evidence" value="ECO:0007669"/>
    <property type="project" value="RHEA"/>
</dbReference>
<dbReference type="GO" id="GO:0004674">
    <property type="term" value="F:protein serine/threonine kinase activity"/>
    <property type="evidence" value="ECO:0007669"/>
    <property type="project" value="UniProtKB-KW"/>
</dbReference>
<dbReference type="GO" id="GO:0004713">
    <property type="term" value="F:protein tyrosine kinase activity"/>
    <property type="evidence" value="ECO:0000314"/>
    <property type="project" value="MGI"/>
</dbReference>
<dbReference type="GO" id="GO:0006915">
    <property type="term" value="P:apoptotic process"/>
    <property type="evidence" value="ECO:0000314"/>
    <property type="project" value="MGI"/>
</dbReference>
<dbReference type="GO" id="GO:0007420">
    <property type="term" value="P:brain development"/>
    <property type="evidence" value="ECO:0000315"/>
    <property type="project" value="MGI"/>
</dbReference>
<dbReference type="GO" id="GO:0051402">
    <property type="term" value="P:neuron apoptotic process"/>
    <property type="evidence" value="ECO:0000314"/>
    <property type="project" value="MGI"/>
</dbReference>
<dbReference type="CDD" id="cd05087">
    <property type="entry name" value="PTKc_Aatyk1"/>
    <property type="match status" value="1"/>
</dbReference>
<dbReference type="FunFam" id="1.10.510.10:FF:000347">
    <property type="entry name" value="Apoptosis associated tyrosine kinase"/>
    <property type="match status" value="1"/>
</dbReference>
<dbReference type="FunFam" id="3.30.200.20:FF:000275">
    <property type="entry name" value="Apoptosis associated tyrosine kinase"/>
    <property type="match status" value="1"/>
</dbReference>
<dbReference type="Gene3D" id="3.30.200.20">
    <property type="entry name" value="Phosphorylase Kinase, domain 1"/>
    <property type="match status" value="1"/>
</dbReference>
<dbReference type="Gene3D" id="1.10.510.10">
    <property type="entry name" value="Transferase(Phosphotransferase) domain 1"/>
    <property type="match status" value="1"/>
</dbReference>
<dbReference type="InterPro" id="IPR011009">
    <property type="entry name" value="Kinase-like_dom_sf"/>
</dbReference>
<dbReference type="InterPro" id="IPR042817">
    <property type="entry name" value="LMTK1_c"/>
</dbReference>
<dbReference type="InterPro" id="IPR000719">
    <property type="entry name" value="Prot_kinase_dom"/>
</dbReference>
<dbReference type="InterPro" id="IPR017441">
    <property type="entry name" value="Protein_kinase_ATP_BS"/>
</dbReference>
<dbReference type="InterPro" id="IPR001245">
    <property type="entry name" value="Ser-Thr/Tyr_kinase_cat_dom"/>
</dbReference>
<dbReference type="InterPro" id="IPR008266">
    <property type="entry name" value="Tyr_kinase_AS"/>
</dbReference>
<dbReference type="PANTHER" id="PTHR24417">
    <property type="entry name" value="SERINE/THREONINE-PROTEIN KINASE LMTK1"/>
    <property type="match status" value="1"/>
</dbReference>
<dbReference type="PANTHER" id="PTHR24417:SF0">
    <property type="entry name" value="SERINE_THREONINE-PROTEIN KINASE LMTK1"/>
    <property type="match status" value="1"/>
</dbReference>
<dbReference type="Pfam" id="PF07714">
    <property type="entry name" value="PK_Tyr_Ser-Thr"/>
    <property type="match status" value="1"/>
</dbReference>
<dbReference type="PRINTS" id="PR00109">
    <property type="entry name" value="TYRKINASE"/>
</dbReference>
<dbReference type="SUPFAM" id="SSF56112">
    <property type="entry name" value="Protein kinase-like (PK-like)"/>
    <property type="match status" value="1"/>
</dbReference>
<dbReference type="PROSITE" id="PS00107">
    <property type="entry name" value="PROTEIN_KINASE_ATP"/>
    <property type="match status" value="1"/>
</dbReference>
<dbReference type="PROSITE" id="PS50011">
    <property type="entry name" value="PROTEIN_KINASE_DOM"/>
    <property type="match status" value="1"/>
</dbReference>
<dbReference type="PROSITE" id="PS00109">
    <property type="entry name" value="PROTEIN_KINASE_TYR"/>
    <property type="match status" value="1"/>
</dbReference>
<name>LMTK1_MOUSE</name>
<reference key="1">
    <citation type="journal article" date="1997" name="Oncogene">
        <title>AATYK: a novel tyrosine kinase induced during growth arrest and apoptosis of myeloid cells.</title>
        <authorList>
            <person name="Gaozza E."/>
            <person name="Baker S.J."/>
            <person name="Vora R.K."/>
            <person name="Reddy E.P."/>
        </authorList>
    </citation>
    <scope>NUCLEOTIDE SEQUENCE [MRNA] (ISOFORM 2)</scope>
    <scope>INDUCTION</scope>
    <scope>TISSUE SPECIFICITY</scope>
    <source>
        <tissue>Bone marrow</tissue>
    </source>
</reference>
<reference key="2">
    <citation type="journal article" date="2001" name="Oncogene">
        <title>Characterization of an alternatively spliced AATYK mRNA: expression pattern of AATYK in the brain and neuronal cells.</title>
        <authorList>
            <person name="Baker S.J."/>
            <person name="Sumerson R."/>
            <person name="Reddy C.D."/>
            <person name="Berrebi A.S."/>
            <person name="Flynn D.C."/>
            <person name="Reddy E.P."/>
        </authorList>
    </citation>
    <scope>NUCLEOTIDE SEQUENCE [MRNA] (ISOFORMS 1 AND 3)</scope>
    <scope>INDUCTION</scope>
    <scope>TISSUE SPECIFICITY</scope>
    <source>
        <strain>129/SvJ</strain>
        <tissue>Brain</tissue>
    </source>
</reference>
<reference key="3">
    <citation type="journal article" date="2007" name="Neuroscience">
        <title>Structural and functional analysis of the apoptosis-associated tyrosine kinase (AATYK) family.</title>
        <authorList>
            <person name="Tomomura M."/>
            <person name="Morita N."/>
            <person name="Yoshikawa F."/>
            <person name="Konishi A."/>
            <person name="Akiyama H."/>
            <person name="Furuichi T."/>
            <person name="Kamiguchi H."/>
        </authorList>
    </citation>
    <scope>NUCLEOTIDE SEQUENCE [MRNA] (ISOFORM 3)</scope>
    <scope>ALTERNATIVE SPLICING (ISOFORM 2)</scope>
    <scope>SUBCELLULAR LOCATION</scope>
    <scope>TISSUE SPECIFICITY</scope>
    <scope>DEVELOPMENTAL STAGE</scope>
    <scope>PHOSPHORYLATION</scope>
    <scope>MUTAGENESIS OF ASP-254</scope>
    <source>
        <tissue>Brain</tissue>
    </source>
</reference>
<reference key="4">
    <citation type="journal article" date="2002" name="DNA Res.">
        <title>Prediction of the coding sequences of mouse homologues of KIAA gene: I. The complete nucleotide sequences of 100 mouse KIAA-homologous cDNAs identified by screening of terminal sequences of cDNA clones randomly sampled from size-fractionated libraries.</title>
        <authorList>
            <person name="Okazaki N."/>
            <person name="Kikuno R."/>
            <person name="Ohara R."/>
            <person name="Inamoto S."/>
            <person name="Hara Y."/>
            <person name="Nagase T."/>
            <person name="Ohara O."/>
            <person name="Koga H."/>
        </authorList>
    </citation>
    <scope>NUCLEOTIDE SEQUENCE [LARGE SCALE MRNA] (ISOFORM 2)</scope>
    <source>
        <tissue>Brain</tissue>
    </source>
</reference>
<reference key="5">
    <citation type="submission" date="2002-10" db="EMBL/GenBank/DDBJ databases">
        <authorList>
            <person name="Okazaki N."/>
            <person name="Kikuno R."/>
            <person name="Nagase T."/>
            <person name="Ohara O."/>
            <person name="Koga H."/>
        </authorList>
    </citation>
    <scope>SEQUENCE REVISION</scope>
</reference>
<reference key="6">
    <citation type="journal article" date="2005" name="Science">
        <title>The transcriptional landscape of the mammalian genome.</title>
        <authorList>
            <person name="Carninci P."/>
            <person name="Kasukawa T."/>
            <person name="Katayama S."/>
            <person name="Gough J."/>
            <person name="Frith M.C."/>
            <person name="Maeda N."/>
            <person name="Oyama R."/>
            <person name="Ravasi T."/>
            <person name="Lenhard B."/>
            <person name="Wells C."/>
            <person name="Kodzius R."/>
            <person name="Shimokawa K."/>
            <person name="Bajic V.B."/>
            <person name="Brenner S.E."/>
            <person name="Batalov S."/>
            <person name="Forrest A.R."/>
            <person name="Zavolan M."/>
            <person name="Davis M.J."/>
            <person name="Wilming L.G."/>
            <person name="Aidinis V."/>
            <person name="Allen J.E."/>
            <person name="Ambesi-Impiombato A."/>
            <person name="Apweiler R."/>
            <person name="Aturaliya R.N."/>
            <person name="Bailey T.L."/>
            <person name="Bansal M."/>
            <person name="Baxter L."/>
            <person name="Beisel K.W."/>
            <person name="Bersano T."/>
            <person name="Bono H."/>
            <person name="Chalk A.M."/>
            <person name="Chiu K.P."/>
            <person name="Choudhary V."/>
            <person name="Christoffels A."/>
            <person name="Clutterbuck D.R."/>
            <person name="Crowe M.L."/>
            <person name="Dalla E."/>
            <person name="Dalrymple B.P."/>
            <person name="de Bono B."/>
            <person name="Della Gatta G."/>
            <person name="di Bernardo D."/>
            <person name="Down T."/>
            <person name="Engstrom P."/>
            <person name="Fagiolini M."/>
            <person name="Faulkner G."/>
            <person name="Fletcher C.F."/>
            <person name="Fukushima T."/>
            <person name="Furuno M."/>
            <person name="Futaki S."/>
            <person name="Gariboldi M."/>
            <person name="Georgii-Hemming P."/>
            <person name="Gingeras T.R."/>
            <person name="Gojobori T."/>
            <person name="Green R.E."/>
            <person name="Gustincich S."/>
            <person name="Harbers M."/>
            <person name="Hayashi Y."/>
            <person name="Hensch T.K."/>
            <person name="Hirokawa N."/>
            <person name="Hill D."/>
            <person name="Huminiecki L."/>
            <person name="Iacono M."/>
            <person name="Ikeo K."/>
            <person name="Iwama A."/>
            <person name="Ishikawa T."/>
            <person name="Jakt M."/>
            <person name="Kanapin A."/>
            <person name="Katoh M."/>
            <person name="Kawasawa Y."/>
            <person name="Kelso J."/>
            <person name="Kitamura H."/>
            <person name="Kitano H."/>
            <person name="Kollias G."/>
            <person name="Krishnan S.P."/>
            <person name="Kruger A."/>
            <person name="Kummerfeld S.K."/>
            <person name="Kurochkin I.V."/>
            <person name="Lareau L.F."/>
            <person name="Lazarevic D."/>
            <person name="Lipovich L."/>
            <person name="Liu J."/>
            <person name="Liuni S."/>
            <person name="McWilliam S."/>
            <person name="Madan Babu M."/>
            <person name="Madera M."/>
            <person name="Marchionni L."/>
            <person name="Matsuda H."/>
            <person name="Matsuzawa S."/>
            <person name="Miki H."/>
            <person name="Mignone F."/>
            <person name="Miyake S."/>
            <person name="Morris K."/>
            <person name="Mottagui-Tabar S."/>
            <person name="Mulder N."/>
            <person name="Nakano N."/>
            <person name="Nakauchi H."/>
            <person name="Ng P."/>
            <person name="Nilsson R."/>
            <person name="Nishiguchi S."/>
            <person name="Nishikawa S."/>
            <person name="Nori F."/>
            <person name="Ohara O."/>
            <person name="Okazaki Y."/>
            <person name="Orlando V."/>
            <person name="Pang K.C."/>
            <person name="Pavan W.J."/>
            <person name="Pavesi G."/>
            <person name="Pesole G."/>
            <person name="Petrovsky N."/>
            <person name="Piazza S."/>
            <person name="Reed J."/>
            <person name="Reid J.F."/>
            <person name="Ring B.Z."/>
            <person name="Ringwald M."/>
            <person name="Rost B."/>
            <person name="Ruan Y."/>
            <person name="Salzberg S.L."/>
            <person name="Sandelin A."/>
            <person name="Schneider C."/>
            <person name="Schoenbach C."/>
            <person name="Sekiguchi K."/>
            <person name="Semple C.A."/>
            <person name="Seno S."/>
            <person name="Sessa L."/>
            <person name="Sheng Y."/>
            <person name="Shibata Y."/>
            <person name="Shimada H."/>
            <person name="Shimada K."/>
            <person name="Silva D."/>
            <person name="Sinclair B."/>
            <person name="Sperling S."/>
            <person name="Stupka E."/>
            <person name="Sugiura K."/>
            <person name="Sultana R."/>
            <person name="Takenaka Y."/>
            <person name="Taki K."/>
            <person name="Tammoja K."/>
            <person name="Tan S.L."/>
            <person name="Tang S."/>
            <person name="Taylor M.S."/>
            <person name="Tegner J."/>
            <person name="Teichmann S.A."/>
            <person name="Ueda H.R."/>
            <person name="van Nimwegen E."/>
            <person name="Verardo R."/>
            <person name="Wei C.L."/>
            <person name="Yagi K."/>
            <person name="Yamanishi H."/>
            <person name="Zabarovsky E."/>
            <person name="Zhu S."/>
            <person name="Zimmer A."/>
            <person name="Hide W."/>
            <person name="Bult C."/>
            <person name="Grimmond S.M."/>
            <person name="Teasdale R.D."/>
            <person name="Liu E.T."/>
            <person name="Brusic V."/>
            <person name="Quackenbush J."/>
            <person name="Wahlestedt C."/>
            <person name="Mattick J.S."/>
            <person name="Hume D.A."/>
            <person name="Kai C."/>
            <person name="Sasaki D."/>
            <person name="Tomaru Y."/>
            <person name="Fukuda S."/>
            <person name="Kanamori-Katayama M."/>
            <person name="Suzuki M."/>
            <person name="Aoki J."/>
            <person name="Arakawa T."/>
            <person name="Iida J."/>
            <person name="Imamura K."/>
            <person name="Itoh M."/>
            <person name="Kato T."/>
            <person name="Kawaji H."/>
            <person name="Kawagashira N."/>
            <person name="Kawashima T."/>
            <person name="Kojima M."/>
            <person name="Kondo S."/>
            <person name="Konno H."/>
            <person name="Nakano K."/>
            <person name="Ninomiya N."/>
            <person name="Nishio T."/>
            <person name="Okada M."/>
            <person name="Plessy C."/>
            <person name="Shibata K."/>
            <person name="Shiraki T."/>
            <person name="Suzuki S."/>
            <person name="Tagami M."/>
            <person name="Waki K."/>
            <person name="Watahiki A."/>
            <person name="Okamura-Oho Y."/>
            <person name="Suzuki H."/>
            <person name="Kawai J."/>
            <person name="Hayashizaki Y."/>
        </authorList>
    </citation>
    <scope>NUCLEOTIDE SEQUENCE [LARGE SCALE MRNA] (ISOFORMS 2 AND 4)</scope>
    <source>
        <strain>C57BL/6J</strain>
        <strain>NOD</strain>
        <tissue>Bone</tissue>
    </source>
</reference>
<reference key="7">
    <citation type="journal article" date="2004" name="Genome Res.">
        <title>The status, quality, and expansion of the NIH full-length cDNA project: the Mammalian Gene Collection (MGC).</title>
        <authorList>
            <consortium name="The MGC Project Team"/>
        </authorList>
    </citation>
    <scope>NUCLEOTIDE SEQUENCE [LARGE SCALE MRNA] (ISOFORM 2)</scope>
    <source>
        <strain>C57BL/6J</strain>
        <tissue>Brain</tissue>
    </source>
</reference>
<reference key="8">
    <citation type="journal article" date="2001" name="Oncogene">
        <title>Characterization of the apoptosis-associated tyrosine kinase (AATYK) expressed in the CNS.</title>
        <authorList>
            <person name="Tomomura M."/>
            <person name="Fernandez-Gonzales A."/>
            <person name="Yano R."/>
            <person name="Yuzaki M."/>
        </authorList>
    </citation>
    <scope>TISSUE SPECIFICITY</scope>
    <scope>PHOSPHORYLATION</scope>
    <scope>MUTAGENESIS OF ASP-254</scope>
</reference>
<reference key="9">
    <citation type="journal article" date="2010" name="Cell">
        <title>A tissue-specific atlas of mouse protein phosphorylation and expression.</title>
        <authorList>
            <person name="Huttlin E.L."/>
            <person name="Jedrychowski M.P."/>
            <person name="Elias J.E."/>
            <person name="Goswami T."/>
            <person name="Rad R."/>
            <person name="Beausoleil S.A."/>
            <person name="Villen J."/>
            <person name="Haas W."/>
            <person name="Sowa M.E."/>
            <person name="Gygi S.P."/>
        </authorList>
    </citation>
    <scope>PHOSPHORYLATION [LARGE SCALE ANALYSIS] AT SER-1035; THR-1156; SER-1159; SER-1162; SER-1175 AND SER-1178</scope>
    <scope>IDENTIFICATION BY MASS SPECTROMETRY [LARGE SCALE ANALYSIS]</scope>
    <source>
        <tissue>Brain</tissue>
    </source>
</reference>
<evidence type="ECO:0000250" key="1"/>
<evidence type="ECO:0000250" key="2">
    <source>
        <dbReference type="UniProtKB" id="Q6ZMQ8"/>
    </source>
</evidence>
<evidence type="ECO:0000255" key="3"/>
<evidence type="ECO:0000255" key="4">
    <source>
        <dbReference type="PROSITE-ProRule" id="PRU00159"/>
    </source>
</evidence>
<evidence type="ECO:0000255" key="5">
    <source>
        <dbReference type="PROSITE-ProRule" id="PRU10028"/>
    </source>
</evidence>
<evidence type="ECO:0000256" key="6">
    <source>
        <dbReference type="SAM" id="MobiDB-lite"/>
    </source>
</evidence>
<evidence type="ECO:0000269" key="7">
    <source>
    </source>
</evidence>
<evidence type="ECO:0000269" key="8">
    <source>
    </source>
</evidence>
<evidence type="ECO:0000269" key="9">
    <source>
    </source>
</evidence>
<evidence type="ECO:0000269" key="10">
    <source>
    </source>
</evidence>
<evidence type="ECO:0000303" key="11">
    <source>
    </source>
</evidence>
<evidence type="ECO:0000303" key="12">
    <source>
    </source>
</evidence>
<evidence type="ECO:0000303" key="13">
    <source>
    </source>
</evidence>
<evidence type="ECO:0000303" key="14">
    <source>
    </source>
</evidence>
<evidence type="ECO:0000303" key="15">
    <source>
    </source>
</evidence>
<evidence type="ECO:0000303" key="16">
    <source>
    </source>
</evidence>
<evidence type="ECO:0000305" key="17"/>
<evidence type="ECO:0007744" key="18">
    <source>
    </source>
</evidence>
<comment type="function">
    <text evidence="1">May be involved in neuronal differentiation.</text>
</comment>
<comment type="catalytic activity">
    <reaction>
        <text>L-seryl-[protein] + ATP = O-phospho-L-seryl-[protein] + ADP + H(+)</text>
        <dbReference type="Rhea" id="RHEA:17989"/>
        <dbReference type="Rhea" id="RHEA-COMP:9863"/>
        <dbReference type="Rhea" id="RHEA-COMP:11604"/>
        <dbReference type="ChEBI" id="CHEBI:15378"/>
        <dbReference type="ChEBI" id="CHEBI:29999"/>
        <dbReference type="ChEBI" id="CHEBI:30616"/>
        <dbReference type="ChEBI" id="CHEBI:83421"/>
        <dbReference type="ChEBI" id="CHEBI:456216"/>
        <dbReference type="EC" id="2.7.11.1"/>
    </reaction>
</comment>
<comment type="catalytic activity">
    <reaction>
        <text>L-threonyl-[protein] + ATP = O-phospho-L-threonyl-[protein] + ADP + H(+)</text>
        <dbReference type="Rhea" id="RHEA:46608"/>
        <dbReference type="Rhea" id="RHEA-COMP:11060"/>
        <dbReference type="Rhea" id="RHEA-COMP:11605"/>
        <dbReference type="ChEBI" id="CHEBI:15378"/>
        <dbReference type="ChEBI" id="CHEBI:30013"/>
        <dbReference type="ChEBI" id="CHEBI:30616"/>
        <dbReference type="ChEBI" id="CHEBI:61977"/>
        <dbReference type="ChEBI" id="CHEBI:456216"/>
        <dbReference type="EC" id="2.7.11.1"/>
    </reaction>
</comment>
<comment type="subunit">
    <text evidence="1">Interacts with CDK5.</text>
</comment>
<comment type="subcellular location">
    <subcellularLocation>
        <location evidence="9">Membrane</location>
        <topology evidence="9">Single-pass type I membrane protein</topology>
    </subcellularLocation>
    <subcellularLocation>
        <location evidence="9">Cytoplasm</location>
    </subcellularLocation>
    <subcellularLocation>
        <location evidence="1">Cytoplasm</location>
        <location evidence="1">Perinuclear region</location>
    </subcellularLocation>
    <subcellularLocation>
        <location evidence="9">Cell projection</location>
        <location evidence="9">Dendrite</location>
    </subcellularLocation>
    <subcellularLocation>
        <location evidence="9">Cell projection</location>
        <location evidence="9">Axon</location>
    </subcellularLocation>
    <subcellularLocation>
        <location evidence="9">Cell projection</location>
        <location evidence="9">Growth cone</location>
    </subcellularLocation>
    <text evidence="1">Predominantly perinuclear.</text>
</comment>
<comment type="subcellular location">
    <molecule>Isoform 2</molecule>
    <subcellularLocation>
        <location>Membrane</location>
    </subcellularLocation>
    <text>Peripheral membrane protein.</text>
</comment>
<comment type="subcellular location">
    <molecule>Isoform 3</molecule>
    <subcellularLocation>
        <location>Membrane</location>
        <topology>Single-pass type I membrane protein</topology>
    </subcellularLocation>
</comment>
<comment type="alternative products">
    <event type="alternative splicing"/>
    <isoform>
        <id>Q80YE4-1</id>
        <name>1</name>
        <sequence type="displayed"/>
    </isoform>
    <isoform>
        <id>Q80YE4-2</id>
        <name>2</name>
        <name>AATYK1A</name>
        <sequence type="described" ref="VSP_020230"/>
    </isoform>
    <isoform>
        <id>Q80YE4-3</id>
        <name>3</name>
        <name>AATYK1B</name>
        <sequence type="described" ref="VSP_020231"/>
    </isoform>
    <isoform>
        <id>Q80YE4-4</id>
        <name>4</name>
        <sequence type="described" ref="VSP_020229 VSP_020232"/>
    </isoform>
</comment>
<comment type="tissue specificity">
    <text evidence="7 8 9 10">Expressed in brain, and, to a lower extent, in kidney, heart, lung and skeletal muscle. In the brain, expressed in the olfactory bulb, cerebellum, striatum, hippocampal formation, thalamus, hypothalamus, and pontine nuclei (at protein level).</text>
</comment>
<comment type="developmental stage">
    <text evidence="9">Isoform 2 is predominantly expressed in adult stage. Isoform 3 is up-regulated during postnatal development.</text>
</comment>
<comment type="induction">
    <text evidence="7 10">Up-regulated during the apoptotic death of myeloid cells induced by cytokine withdrawal, such as IL3, and during G-CSF-induced terminal differentiation of myeloblasts to granulocytes.</text>
</comment>
<comment type="PTM">
    <text evidence="1">Autophosphorylated. Phosphorylated by CDK5 (By similarity).</text>
</comment>
<comment type="similarity">
    <text evidence="4">Belongs to the protein kinase superfamily. Tyr protein kinase family.</text>
</comment>
<comment type="sequence caution" evidence="17">
    <conflict type="erroneous initiation">
        <sequence resource="EMBL-CDS" id="BAC41437"/>
    </conflict>
    <text>Extended N-terminus.</text>
</comment>
<protein>
    <recommendedName>
        <fullName>Serine/threonine-protein kinase LMTK1</fullName>
        <ecNumber>2.7.11.1</ecNumber>
    </recommendedName>
    <alternativeName>
        <fullName>Apoptosis-associated tyrosine kinase</fullName>
        <shortName>AATYK</shortName>
    </alternativeName>
    <alternativeName>
        <fullName>Brain apoptosis-associated tyrosine kinase</fullName>
    </alternativeName>
    <alternativeName>
        <fullName>Lemur tyrosine kinase 1</fullName>
    </alternativeName>
</protein>
<sequence length="1365" mass="144607">MSSSFFNPSFAFSSHFDPDGAPLSELSWSSSLAVVAVSFSGIFTVVILMLACLCCKKGGIGFKEFENAEGDEYVADFSEQGSPAAAAQTGPDVYVLPLTEVSLPMAKQPGRSVQLLKSTDLGRHSLLYLKEIGHGWFGKVFLGEVHSGVSGTQVVVKELKVSASVQEQMQFLEEAQPYRALQHSNLLQCLAQCAEVTPYLLVMEFCPLGDLKGYLRSCRVTESMAPDPLTLQRMACEVACGVLHLHRHNYVHSDLALRNCLLTADLTVKVGDYGLSHCKYREDYLVTADQLWVPLRWIAPELVDEVHGNLLVVDQTKSSNVWSLGVTIWELFELGAQPYPQHSDRQVLAYAVREQQLKLPKPQLQLALSDRWYEVMQFCWLQPEQRPTAEEVHLLLSYLCAKGTTELEEEFERRWRSLRPGGSTGLGSGSAAPAAATAASAELTAASSFPLLERFTSDGFHVDSDDVLTVTETSHGLNFEYKWEAGCGAEEYPPSGAASSPGSAARLQELCAPDSSPPGVVPVLSAHSPSVGSEYFIRLEGAVPAAGHDPDCAGCAPSPQAVTDQDNNSEESTVASLAMEPLLGHAPPTEGLWGPCDHHSHRRQGSPCPSRSPSPGTPMLPAEDIDWGVATFCPPFFDDPLGASPSGSPGAQPSPSDEEPEEGKVGLAAQCGHWSSNMSANNNSASRDPESWDPGYVSSFTDSYRDDCSSLEQTPRASPEVGHLLSQEDPRDFLPGLVAVSPGQEPSRPFNLLPLCPAKGLAPAACLITSPWTEGAVGGAENPIVEPKLAQEAEGSAEPQLPLPSVPSPSCEGASLPSEEASAPDILPASPTPAAGSWVTVPEPAPTLESSGSSLGQEAPSSEDEDTTEATSGVFTDLSSDGPHTEKSGIVPALRSLQKQVGTPDSLDSLDIPSSASDGGCEVLSPSAAGPPGGQPRAVDSGYDTENYESPEFVLKEAHESSEPEAFGEPASEGESPGPDPLLSVSLGGLSKKSPYRDSAYFSDLDAESEPTFGPEKHSGIQDSQKEQDLRSPPSPGHQSVQAFPRSAVSSEVLSPPQQSEEPLPEVPRPEPLGAQGPVGVQPVPGPSHSKCFPLTSVPLISEGSGTEPQGPSGQLSGRAQQGQMGNPSTPRSPLCLALPGHPGALEGRPEEDEDTEDSEESDEELRCYSVQEPSEDSEEEPPAVPVVVAESQSARNLRSLLKMPSLLSEAFCDDLERKKKAVSFFDDVTVYLFDQESPTRETGEPFPSTKESLPTFLEGGPSSPSATGLPLRAGHSPDSSAPEPGSRFEWDGDFPLVPGKAALVTELDPADPVLAAPPTPAAPFSRFTVSPTPASRFSITHISDSDAQSVGGPAAGAGGRYTEA</sequence>
<gene>
    <name type="primary">Aatk</name>
    <name type="synonym">Aatyk</name>
    <name type="synonym">Kiaa0641</name>
    <name type="synonym">Lmr1</name>
    <name type="synonym">Lmtk1</name>
</gene>
<keyword id="KW-0025">Alternative splicing</keyword>
<keyword id="KW-0067">ATP-binding</keyword>
<keyword id="KW-0966">Cell projection</keyword>
<keyword id="KW-0963">Cytoplasm</keyword>
<keyword id="KW-0418">Kinase</keyword>
<keyword id="KW-0472">Membrane</keyword>
<keyword id="KW-0547">Nucleotide-binding</keyword>
<keyword id="KW-0597">Phosphoprotein</keyword>
<keyword id="KW-1185">Reference proteome</keyword>
<keyword id="KW-0723">Serine/threonine-protein kinase</keyword>
<keyword id="KW-0808">Transferase</keyword>
<keyword id="KW-0812">Transmembrane</keyword>
<keyword id="KW-1133">Transmembrane helix</keyword>
<accession>Q80YE4</accession>
<accession>A6BLY8</accession>
<accession>O35211</accession>
<accession>Q3U2U5</accession>
<accession>Q3UHR8</accession>
<accession>Q66JN3</accession>
<accession>Q80YE3</accession>
<accession>Q8CB63</accession>
<accession>Q8CHE2</accession>